<comment type="function">
    <text evidence="1">Catalyzes the phosphorolysis of diverse nucleosides, yielding D-ribose 1-phosphate and the respective free bases. Can use uridine, adenosine, guanosine, cytidine, thymidine, inosine and xanthosine as substrates. Also catalyzes the reverse reactions.</text>
</comment>
<comment type="catalytic activity">
    <reaction evidence="1">
        <text>a purine D-ribonucleoside + phosphate = a purine nucleobase + alpha-D-ribose 1-phosphate</text>
        <dbReference type="Rhea" id="RHEA:19805"/>
        <dbReference type="ChEBI" id="CHEBI:26386"/>
        <dbReference type="ChEBI" id="CHEBI:43474"/>
        <dbReference type="ChEBI" id="CHEBI:57720"/>
        <dbReference type="ChEBI" id="CHEBI:142355"/>
        <dbReference type="EC" id="2.4.2.1"/>
    </reaction>
</comment>
<comment type="catalytic activity">
    <reaction evidence="1">
        <text>adenosine + phosphate = alpha-D-ribose 1-phosphate + adenine</text>
        <dbReference type="Rhea" id="RHEA:27642"/>
        <dbReference type="ChEBI" id="CHEBI:16335"/>
        <dbReference type="ChEBI" id="CHEBI:16708"/>
        <dbReference type="ChEBI" id="CHEBI:43474"/>
        <dbReference type="ChEBI" id="CHEBI:57720"/>
        <dbReference type="EC" id="2.4.2.1"/>
    </reaction>
</comment>
<comment type="catalytic activity">
    <reaction evidence="1">
        <text>cytidine + phosphate = cytosine + alpha-D-ribose 1-phosphate</text>
        <dbReference type="Rhea" id="RHEA:52540"/>
        <dbReference type="ChEBI" id="CHEBI:16040"/>
        <dbReference type="ChEBI" id="CHEBI:17562"/>
        <dbReference type="ChEBI" id="CHEBI:43474"/>
        <dbReference type="ChEBI" id="CHEBI:57720"/>
        <dbReference type="EC" id="2.4.2.2"/>
    </reaction>
</comment>
<comment type="catalytic activity">
    <reaction evidence="1">
        <text>guanosine + phosphate = alpha-D-ribose 1-phosphate + guanine</text>
        <dbReference type="Rhea" id="RHEA:13233"/>
        <dbReference type="ChEBI" id="CHEBI:16235"/>
        <dbReference type="ChEBI" id="CHEBI:16750"/>
        <dbReference type="ChEBI" id="CHEBI:43474"/>
        <dbReference type="ChEBI" id="CHEBI:57720"/>
        <dbReference type="EC" id="2.4.2.1"/>
    </reaction>
</comment>
<comment type="catalytic activity">
    <reaction evidence="1">
        <text>inosine + phosphate = alpha-D-ribose 1-phosphate + hypoxanthine</text>
        <dbReference type="Rhea" id="RHEA:27646"/>
        <dbReference type="ChEBI" id="CHEBI:17368"/>
        <dbReference type="ChEBI" id="CHEBI:17596"/>
        <dbReference type="ChEBI" id="CHEBI:43474"/>
        <dbReference type="ChEBI" id="CHEBI:57720"/>
        <dbReference type="EC" id="2.4.2.1"/>
    </reaction>
</comment>
<comment type="catalytic activity">
    <reaction evidence="1">
        <text>thymidine + phosphate = 2-deoxy-alpha-D-ribose 1-phosphate + thymine</text>
        <dbReference type="Rhea" id="RHEA:16037"/>
        <dbReference type="ChEBI" id="CHEBI:17748"/>
        <dbReference type="ChEBI" id="CHEBI:17821"/>
        <dbReference type="ChEBI" id="CHEBI:43474"/>
        <dbReference type="ChEBI" id="CHEBI:57259"/>
        <dbReference type="EC" id="2.4.2.2"/>
    </reaction>
</comment>
<comment type="catalytic activity">
    <reaction evidence="1">
        <text>uridine + phosphate = alpha-D-ribose 1-phosphate + uracil</text>
        <dbReference type="Rhea" id="RHEA:24388"/>
        <dbReference type="ChEBI" id="CHEBI:16704"/>
        <dbReference type="ChEBI" id="CHEBI:17568"/>
        <dbReference type="ChEBI" id="CHEBI:43474"/>
        <dbReference type="ChEBI" id="CHEBI:57720"/>
        <dbReference type="EC" id="2.4.2.2"/>
    </reaction>
</comment>
<comment type="catalytic activity">
    <reaction evidence="1">
        <text>xanthosine + phosphate = alpha-D-ribose 1-phosphate + xanthine</text>
        <dbReference type="Rhea" id="RHEA:27638"/>
        <dbReference type="ChEBI" id="CHEBI:17712"/>
        <dbReference type="ChEBI" id="CHEBI:18107"/>
        <dbReference type="ChEBI" id="CHEBI:43474"/>
        <dbReference type="ChEBI" id="CHEBI:57720"/>
        <dbReference type="EC" id="2.4.2.1"/>
    </reaction>
</comment>
<comment type="similarity">
    <text evidence="1">Belongs to the nucleoside phosphorylase PpnP family.</text>
</comment>
<feature type="chain" id="PRO_1000198663" description="Pyrimidine/purine nucleoside phosphorylase">
    <location>
        <begin position="1"/>
        <end position="94"/>
    </location>
</feature>
<evidence type="ECO:0000255" key="1">
    <source>
        <dbReference type="HAMAP-Rule" id="MF_01537"/>
    </source>
</evidence>
<dbReference type="EC" id="2.4.2.1" evidence="1"/>
<dbReference type="EC" id="2.4.2.2" evidence="1"/>
<dbReference type="EMBL" id="CU928164">
    <property type="protein sequence ID" value="CAR16430.1"/>
    <property type="molecule type" value="Genomic_DNA"/>
</dbReference>
<dbReference type="RefSeq" id="WP_000941942.1">
    <property type="nucleotide sequence ID" value="NC_011750.1"/>
</dbReference>
<dbReference type="RefSeq" id="YP_002406333.1">
    <property type="nucleotide sequence ID" value="NC_011750.1"/>
</dbReference>
<dbReference type="SMR" id="B7NJB1"/>
<dbReference type="STRING" id="585057.ECIAI39_0290"/>
<dbReference type="GeneID" id="93777070"/>
<dbReference type="KEGG" id="ect:ECIAI39_0290"/>
<dbReference type="PATRIC" id="fig|585057.6.peg.316"/>
<dbReference type="HOGENOM" id="CLU_157874_0_0_6"/>
<dbReference type="Proteomes" id="UP000000749">
    <property type="component" value="Chromosome"/>
</dbReference>
<dbReference type="GO" id="GO:0005829">
    <property type="term" value="C:cytosol"/>
    <property type="evidence" value="ECO:0007669"/>
    <property type="project" value="TreeGrafter"/>
</dbReference>
<dbReference type="GO" id="GO:0047975">
    <property type="term" value="F:guanosine phosphorylase activity"/>
    <property type="evidence" value="ECO:0007669"/>
    <property type="project" value="UniProtKB-EC"/>
</dbReference>
<dbReference type="GO" id="GO:0004731">
    <property type="term" value="F:purine-nucleoside phosphorylase activity"/>
    <property type="evidence" value="ECO:0007669"/>
    <property type="project" value="UniProtKB-UniRule"/>
</dbReference>
<dbReference type="GO" id="GO:0009032">
    <property type="term" value="F:thymidine phosphorylase activity"/>
    <property type="evidence" value="ECO:0007669"/>
    <property type="project" value="UniProtKB-EC"/>
</dbReference>
<dbReference type="GO" id="GO:0004850">
    <property type="term" value="F:uridine phosphorylase activity"/>
    <property type="evidence" value="ECO:0007669"/>
    <property type="project" value="UniProtKB-EC"/>
</dbReference>
<dbReference type="CDD" id="cd20296">
    <property type="entry name" value="cupin_PpnP-like"/>
    <property type="match status" value="1"/>
</dbReference>
<dbReference type="FunFam" id="2.60.120.10:FF:000016">
    <property type="entry name" value="Pyrimidine/purine nucleoside phosphorylase"/>
    <property type="match status" value="1"/>
</dbReference>
<dbReference type="Gene3D" id="2.60.120.10">
    <property type="entry name" value="Jelly Rolls"/>
    <property type="match status" value="1"/>
</dbReference>
<dbReference type="HAMAP" id="MF_01537">
    <property type="entry name" value="Nucleos_phosphorylase_PpnP"/>
    <property type="match status" value="1"/>
</dbReference>
<dbReference type="InterPro" id="IPR009664">
    <property type="entry name" value="Ppnp"/>
</dbReference>
<dbReference type="InterPro" id="IPR014710">
    <property type="entry name" value="RmlC-like_jellyroll"/>
</dbReference>
<dbReference type="InterPro" id="IPR011051">
    <property type="entry name" value="RmlC_Cupin_sf"/>
</dbReference>
<dbReference type="NCBIfam" id="NF007875">
    <property type="entry name" value="PRK10579.1"/>
    <property type="match status" value="1"/>
</dbReference>
<dbReference type="PANTHER" id="PTHR36540">
    <property type="entry name" value="PYRIMIDINE/PURINE NUCLEOSIDE PHOSPHORYLASE"/>
    <property type="match status" value="1"/>
</dbReference>
<dbReference type="PANTHER" id="PTHR36540:SF1">
    <property type="entry name" value="PYRIMIDINE_PURINE NUCLEOSIDE PHOSPHORYLASE"/>
    <property type="match status" value="1"/>
</dbReference>
<dbReference type="Pfam" id="PF06865">
    <property type="entry name" value="Ppnp"/>
    <property type="match status" value="1"/>
</dbReference>
<dbReference type="SUPFAM" id="SSF51182">
    <property type="entry name" value="RmlC-like cupins"/>
    <property type="match status" value="1"/>
</dbReference>
<organism>
    <name type="scientific">Escherichia coli O7:K1 (strain IAI39 / ExPEC)</name>
    <dbReference type="NCBI Taxonomy" id="585057"/>
    <lineage>
        <taxon>Bacteria</taxon>
        <taxon>Pseudomonadati</taxon>
        <taxon>Pseudomonadota</taxon>
        <taxon>Gammaproteobacteria</taxon>
        <taxon>Enterobacterales</taxon>
        <taxon>Enterobacteriaceae</taxon>
        <taxon>Escherichia</taxon>
    </lineage>
</organism>
<reference key="1">
    <citation type="journal article" date="2009" name="PLoS Genet.">
        <title>Organised genome dynamics in the Escherichia coli species results in highly diverse adaptive paths.</title>
        <authorList>
            <person name="Touchon M."/>
            <person name="Hoede C."/>
            <person name="Tenaillon O."/>
            <person name="Barbe V."/>
            <person name="Baeriswyl S."/>
            <person name="Bidet P."/>
            <person name="Bingen E."/>
            <person name="Bonacorsi S."/>
            <person name="Bouchier C."/>
            <person name="Bouvet O."/>
            <person name="Calteau A."/>
            <person name="Chiapello H."/>
            <person name="Clermont O."/>
            <person name="Cruveiller S."/>
            <person name="Danchin A."/>
            <person name="Diard M."/>
            <person name="Dossat C."/>
            <person name="Karoui M.E."/>
            <person name="Frapy E."/>
            <person name="Garry L."/>
            <person name="Ghigo J.M."/>
            <person name="Gilles A.M."/>
            <person name="Johnson J."/>
            <person name="Le Bouguenec C."/>
            <person name="Lescat M."/>
            <person name="Mangenot S."/>
            <person name="Martinez-Jehanne V."/>
            <person name="Matic I."/>
            <person name="Nassif X."/>
            <person name="Oztas S."/>
            <person name="Petit M.A."/>
            <person name="Pichon C."/>
            <person name="Rouy Z."/>
            <person name="Ruf C.S."/>
            <person name="Schneider D."/>
            <person name="Tourret J."/>
            <person name="Vacherie B."/>
            <person name="Vallenet D."/>
            <person name="Medigue C."/>
            <person name="Rocha E.P.C."/>
            <person name="Denamur E."/>
        </authorList>
    </citation>
    <scope>NUCLEOTIDE SEQUENCE [LARGE SCALE GENOMIC DNA]</scope>
    <source>
        <strain>IAI39 / ExPEC</strain>
    </source>
</reference>
<keyword id="KW-0328">Glycosyltransferase</keyword>
<keyword id="KW-0808">Transferase</keyword>
<name>PPNP_ECO7I</name>
<protein>
    <recommendedName>
        <fullName evidence="1">Pyrimidine/purine nucleoside phosphorylase</fullName>
        <ecNumber evidence="1">2.4.2.1</ecNumber>
        <ecNumber evidence="1">2.4.2.2</ecNumber>
    </recommendedName>
    <alternativeName>
        <fullName evidence="1">Adenosine phosphorylase</fullName>
    </alternativeName>
    <alternativeName>
        <fullName evidence="1">Cytidine phosphorylase</fullName>
    </alternativeName>
    <alternativeName>
        <fullName evidence="1">Guanosine phosphorylase</fullName>
    </alternativeName>
    <alternativeName>
        <fullName evidence="1">Inosine phosphorylase</fullName>
    </alternativeName>
    <alternativeName>
        <fullName evidence="1">Thymidine phosphorylase</fullName>
    </alternativeName>
    <alternativeName>
        <fullName evidence="1">Uridine phosphorylase</fullName>
    </alternativeName>
    <alternativeName>
        <fullName evidence="1">Xanthosine phosphorylase</fullName>
    </alternativeName>
</protein>
<proteinExistence type="inferred from homology"/>
<accession>B7NJB1</accession>
<gene>
    <name evidence="1" type="primary">ppnP</name>
    <name type="ordered locus">ECIAI39_0290</name>
</gene>
<sequence length="94" mass="10234">MLQSNEYFSGKVKSIGFSSSSTGRASVGVMVEGEYTFSTAEPEEMTVISGALNVLLPDATDWQVYEAGSVFNVPGHSEFHLQVAEPTSYLCRYL</sequence>